<accession>A2QC57</accession>
<reference key="1">
    <citation type="journal article" date="2007" name="Nat. Biotechnol.">
        <title>Genome sequencing and analysis of the versatile cell factory Aspergillus niger CBS 513.88.</title>
        <authorList>
            <person name="Pel H.J."/>
            <person name="de Winde J.H."/>
            <person name="Archer D.B."/>
            <person name="Dyer P.S."/>
            <person name="Hofmann G."/>
            <person name="Schaap P.J."/>
            <person name="Turner G."/>
            <person name="de Vries R.P."/>
            <person name="Albang R."/>
            <person name="Albermann K."/>
            <person name="Andersen M.R."/>
            <person name="Bendtsen J.D."/>
            <person name="Benen J.A.E."/>
            <person name="van den Berg M."/>
            <person name="Breestraat S."/>
            <person name="Caddick M.X."/>
            <person name="Contreras R."/>
            <person name="Cornell M."/>
            <person name="Coutinho P.M."/>
            <person name="Danchin E.G.J."/>
            <person name="Debets A.J.M."/>
            <person name="Dekker P."/>
            <person name="van Dijck P.W.M."/>
            <person name="van Dijk A."/>
            <person name="Dijkhuizen L."/>
            <person name="Driessen A.J.M."/>
            <person name="d'Enfert C."/>
            <person name="Geysens S."/>
            <person name="Goosen C."/>
            <person name="Groot G.S.P."/>
            <person name="de Groot P.W.J."/>
            <person name="Guillemette T."/>
            <person name="Henrissat B."/>
            <person name="Herweijer M."/>
            <person name="van den Hombergh J.P.T.W."/>
            <person name="van den Hondel C.A.M.J.J."/>
            <person name="van der Heijden R.T.J.M."/>
            <person name="van der Kaaij R.M."/>
            <person name="Klis F.M."/>
            <person name="Kools H.J."/>
            <person name="Kubicek C.P."/>
            <person name="van Kuyk P.A."/>
            <person name="Lauber J."/>
            <person name="Lu X."/>
            <person name="van der Maarel M.J.E.C."/>
            <person name="Meulenberg R."/>
            <person name="Menke H."/>
            <person name="Mortimer M.A."/>
            <person name="Nielsen J."/>
            <person name="Oliver S.G."/>
            <person name="Olsthoorn M."/>
            <person name="Pal K."/>
            <person name="van Peij N.N.M.E."/>
            <person name="Ram A.F.J."/>
            <person name="Rinas U."/>
            <person name="Roubos J.A."/>
            <person name="Sagt C.M.J."/>
            <person name="Schmoll M."/>
            <person name="Sun J."/>
            <person name="Ussery D."/>
            <person name="Varga J."/>
            <person name="Vervecken W."/>
            <person name="van de Vondervoort P.J.J."/>
            <person name="Wedler H."/>
            <person name="Woesten H.A.B."/>
            <person name="Zeng A.-P."/>
            <person name="van Ooyen A.J.J."/>
            <person name="Visser J."/>
            <person name="Stam H."/>
        </authorList>
    </citation>
    <scope>NUCLEOTIDE SEQUENCE [LARGE SCALE GENOMIC DNA]</scope>
    <source>
        <strain>ATCC MYA-4892 / CBS 513.88 / FGSC A1513</strain>
    </source>
</reference>
<reference key="2">
    <citation type="journal article" date="2024" name="Fungal Biol. Biotechnol.">
        <title>Breaking down barriers: comprehensive functional analysis of the Aspergillus niger chitin synthase repertoire.</title>
        <authorList>
            <person name="Barthel L."/>
            <person name="Cairns T."/>
            <person name="Duda S."/>
            <person name="Mueller H."/>
            <person name="Dobbert B."/>
            <person name="Jung S."/>
            <person name="Briesen H."/>
            <person name="Meyer V."/>
        </authorList>
    </citation>
    <scope>FUNCTION</scope>
    <scope>DISRUPTION PHENOTYPE</scope>
</reference>
<feature type="chain" id="PRO_0000460973" description="Chitin synthase csmA">
    <location>
        <begin position="1"/>
        <end position="1614" status="greater than"/>
    </location>
</feature>
<feature type="transmembrane region" description="Helical" evidence="2">
    <location>
        <begin position="898"/>
        <end position="918"/>
    </location>
</feature>
<feature type="transmembrane region" description="Helical" evidence="2">
    <location>
        <begin position="937"/>
        <end position="957"/>
    </location>
</feature>
<feature type="transmembrane region" description="Helical" evidence="2">
    <location>
        <begin position="1209"/>
        <end position="1229"/>
    </location>
</feature>
<feature type="domain" description="Myosin motor" evidence="5">
    <location>
        <begin position="1"/>
        <end position="788"/>
    </location>
</feature>
<feature type="domain" description="Cytochrome b5 heme-binding" evidence="3">
    <location>
        <begin position="961"/>
        <end position="1020"/>
    </location>
</feature>
<feature type="region of interest" description="Disordered" evidence="6">
    <location>
        <begin position="1"/>
        <end position="22"/>
    </location>
</feature>
<feature type="region of interest" description="Disordered" evidence="6">
    <location>
        <begin position="600"/>
        <end position="650"/>
    </location>
</feature>
<feature type="region of interest" description="Actin-binding" evidence="5">
    <location>
        <begin position="668"/>
        <end position="692"/>
    </location>
</feature>
<feature type="compositionally biased region" description="Polar residues" evidence="6">
    <location>
        <begin position="9"/>
        <end position="19"/>
    </location>
</feature>
<feature type="compositionally biased region" description="Acidic residues" evidence="6">
    <location>
        <begin position="626"/>
        <end position="635"/>
    </location>
</feature>
<feature type="binding site" evidence="5">
    <location>
        <begin position="105"/>
        <end position="112"/>
    </location>
    <ligand>
        <name>ATP</name>
        <dbReference type="ChEBI" id="CHEBI:30616"/>
    </ligand>
</feature>
<feature type="glycosylation site" description="N-linked (GlcNAc...) asparagine" evidence="4">
    <location>
        <position position="1047"/>
    </location>
</feature>
<feature type="glycosylation site" description="N-linked (GlcNAc...) asparagine" evidence="4">
    <location>
        <position position="1072"/>
    </location>
</feature>
<feature type="glycosylation site" description="N-linked (GlcNAc...) asparagine" evidence="4">
    <location>
        <position position="1572"/>
    </location>
</feature>
<feature type="non-terminal residue" evidence="11">
    <location>
        <position position="1614"/>
    </location>
</feature>
<gene>
    <name evidence="8" type="primary">csmA</name>
    <name type="ORF">An02g02360</name>
</gene>
<organism>
    <name type="scientific">Aspergillus niger (strain ATCC MYA-4892 / CBS 513.88 / FGSC A1513)</name>
    <dbReference type="NCBI Taxonomy" id="425011"/>
    <lineage>
        <taxon>Eukaryota</taxon>
        <taxon>Fungi</taxon>
        <taxon>Dikarya</taxon>
        <taxon>Ascomycota</taxon>
        <taxon>Pezizomycotina</taxon>
        <taxon>Eurotiomycetes</taxon>
        <taxon>Eurotiomycetidae</taxon>
        <taxon>Eurotiales</taxon>
        <taxon>Aspergillaceae</taxon>
        <taxon>Aspergillus</taxon>
        <taxon>Aspergillus subgen. Circumdati</taxon>
    </lineage>
</organism>
<protein>
    <recommendedName>
        <fullName evidence="8">Chitin synthase csmA</fullName>
        <ecNumber evidence="10">2.4.1.16</ecNumber>
    </recommendedName>
    <alternativeName>
        <fullName evidence="9">Chitin-UDP acetyl-glucosaminyl transferase csmA</fullName>
    </alternativeName>
    <alternativeName>
        <fullName evidence="8">Class-V chitin synthase csmA</fullName>
    </alternativeName>
</protein>
<name>CSMA_ASPNC</name>
<proteinExistence type="inferred from homology"/>
<evidence type="ECO:0000250" key="1">
    <source>
        <dbReference type="UniProtKB" id="G5EB74"/>
    </source>
</evidence>
<evidence type="ECO:0000255" key="2"/>
<evidence type="ECO:0000255" key="3">
    <source>
        <dbReference type="PROSITE-ProRule" id="PRU00279"/>
    </source>
</evidence>
<evidence type="ECO:0000255" key="4">
    <source>
        <dbReference type="PROSITE-ProRule" id="PRU00498"/>
    </source>
</evidence>
<evidence type="ECO:0000255" key="5">
    <source>
        <dbReference type="PROSITE-ProRule" id="PRU00782"/>
    </source>
</evidence>
<evidence type="ECO:0000256" key="6">
    <source>
        <dbReference type="SAM" id="MobiDB-lite"/>
    </source>
</evidence>
<evidence type="ECO:0000269" key="7">
    <source>
    </source>
</evidence>
<evidence type="ECO:0000303" key="8">
    <source>
    </source>
</evidence>
<evidence type="ECO:0000305" key="9"/>
<evidence type="ECO:0000305" key="10">
    <source>
    </source>
</evidence>
<evidence type="ECO:0000312" key="11">
    <source>
        <dbReference type="EMBL" id="CAK96410.1"/>
    </source>
</evidence>
<keyword id="KW-0009">Actin-binding</keyword>
<keyword id="KW-0067">ATP-binding</keyword>
<keyword id="KW-1003">Cell membrane</keyword>
<keyword id="KW-0325">Glycoprotein</keyword>
<keyword id="KW-0328">Glycosyltransferase</keyword>
<keyword id="KW-0472">Membrane</keyword>
<keyword id="KW-0505">Motor protein</keyword>
<keyword id="KW-0518">Myosin</keyword>
<keyword id="KW-0547">Nucleotide-binding</keyword>
<keyword id="KW-1185">Reference proteome</keyword>
<keyword id="KW-0808">Transferase</keyword>
<keyword id="KW-0812">Transmembrane</keyword>
<keyword id="KW-1133">Transmembrane helix</keyword>
<sequence>MAGPAPSGRTPSHAQSSLPSLPAHLQSDTHLTAHLASRFHVGLPTARLSSQALISLNTYTTSSRGPDGDKEGSAMGEAEDLAKRAFTRLGARGENQAIVFLHSSGESGSGKTTIRSHLLSSFLSFSSTPLSSKLSYAAFVFDTLTTTKSVTTPTASKAGLFLELQYDGSSSVNPTLIGGKIIDHRLERSRIASVPTGERSFHVLYYLLAGTSAAEKEHLGFDSSIHVSTSGGKLSGASIGHKRWRYLGHPTQLKVGINDADGFQHFKTALRKLEFPRSEIAEFCQILATILHLGQLDFVSGQATTTTAEESGGYSHEGGETVTVVKNKDVLSVIAAFLGLGVEELETSFGYRTKTIRRERVTVMLDPKGARQNADGLARTLYSLLVAYIFEGINQRICAAEDSVANTVSILDFPGFSQASATGSTLDQLLSNAATESLYNFCLQSFFERKAEMLDREEVTVPATSYFDNSDATRGLLKSGNGLLSILDDQTKRGRTDSQFLESVKKRFENKNPAITVGSTGQGTTLISQGARSAFTVKHFAGEVDYPVQGLLEENGDVVSGDLMNLMRSTSSDFVRDLFGQEALQTVTHPQERTAIMQAQVSSKPMRMPSMARRKAGPSRLAFDAPEGDDQDEYDSQAGSMSKSSARRKSTMLANGMQGAAGQFLSSLDIVSKCLNSANLNPYFVFCLKPNDRRIANQFDSKCVRAQVQTFGIAEISQRLRNADFSIFLPFAEFLGLAEIGNVVVGSDKEKSEVVLDEKRWPGNEARVGSTGVFLSERCWADLAKLGERVVPVFPAEGSDEGGDNLLHARAGGYADSKVRLLGPTDQSPGGFIYGEDGKQGYSSSREFDGRSDAGASAFNSGDMFRNLDTREQMLEKGNEKKMEEVDEAPVSGSRKRWMAIVYLLTFYIPDFLIKTFGRMPRKDVRVAWREKLAINLIIWFSCAFAIFFIVAFPGLICPTQHVYSTAELSSHNGKDGHNSFVAIRGIVFNLDKFMPSHYPDIVPEKSLKKYAGTDATGLFPVQVSALCPGKDGSIDPTVLLDYSSTNVSGSATTVSTSDTNWVYHDFRYFTNDSRPDWFQEQMIMLKANYFKGWIGYTPTYMKTLGDKSQYIGSINGRVYDLTTYVAGGRRVQAPVGKSVPANVDRDFMDDLVVELFQRLPGQDLTKYWEDLQISDVMRERMQLCLDNLFFVGHVDTRNSPRCQFARYFILAISIFICLIVVFKFLAALQFSRKNLPENLDKFIICQVPAYTEDEESLRRAIDSMARMRYDDKRKLLVVICDGMIIGQGNDRPTPRIVLDILGVPESVDPEPLSFESLGEGMKQHNMGKIYSGLYEVMGHIVPFLVVVKVGKPSEVARPGNRGKRDSQMVLMRFLNRVHYNLPMSPMELEIYHQIRNIIGVNPTFYEFILQVDADTVVAPDAATRMVSTLLADTRILGVCGETALSNAKTSMVTMIQVYEYYISHNLVKAFESLFGSITCLPGCFTMYRIRSADSGKPLFVSKEIVEAYSEIRVDTLHMKNLLHLGEDRYLTTLLIKHHPKYKTKYISAAKAFTIAPESFAVFLSQRRRWINSTVHNLIELIPLNQLCGFCCFSMRFIVFVDLISTIIQPVTVA</sequence>
<comment type="function">
    <text evidence="7 10">Polymerizes chitin, a structural polymer of the cell wall and septum, by transferring the sugar moiety of UDP-GlcNAc to the non-reducing end of the growing chitin polymer (Probable). Acts as the major chitin synthase in Aspergillus niger involved in cell wall integrity which is principally responsible for chitin synthesis at the lateral cell wall (PubMed:38468360). Plays an important role in septal growth or maintenance (PubMed:38468360). Mediates colony spore formation (PubMed:38468360).</text>
</comment>
<comment type="catalytic activity">
    <reaction evidence="10">
        <text>[(1-&gt;4)-N-acetyl-beta-D-glucosaminyl](n) + UDP-N-acetyl-alpha-D-glucosamine = [(1-&gt;4)-N-acetyl-beta-D-glucosaminyl](n+1) + UDP + H(+)</text>
        <dbReference type="Rhea" id="RHEA:16637"/>
        <dbReference type="Rhea" id="RHEA-COMP:9593"/>
        <dbReference type="Rhea" id="RHEA-COMP:9595"/>
        <dbReference type="ChEBI" id="CHEBI:15378"/>
        <dbReference type="ChEBI" id="CHEBI:17029"/>
        <dbReference type="ChEBI" id="CHEBI:57705"/>
        <dbReference type="ChEBI" id="CHEBI:58223"/>
        <dbReference type="EC" id="2.4.1.16"/>
    </reaction>
    <physiologicalReaction direction="left-to-right" evidence="10">
        <dbReference type="Rhea" id="RHEA:16638"/>
    </physiologicalReaction>
</comment>
<comment type="subcellular location">
    <subcellularLocation>
        <location evidence="1">Cell membrane</location>
        <topology evidence="2">Multi-pass membrane protein</topology>
    </subcellularLocation>
    <subcellularLocation>
        <location evidence="1">Cell septum</location>
    </subcellularLocation>
    <subcellularLocation>
        <location evidence="1">Cell tip</location>
    </subcellularLocation>
    <text evidence="1">Concentrates at the hyphal tips and septation sites near actin structures, which is dependent on the actin-binding ability of the N-terminal myosin motor-like domain (MMD).</text>
</comment>
<comment type="domain">
    <text evidence="1">The N-terminal myosin motor-like domain (MMD) does not seem to have motor activity but is indispensable for polarized cell wall synthesis via binding to actin that ensures the proper localization to the hyphal tips and septation sites near actin structures.</text>
</comment>
<comment type="disruption phenotype">
    <text evidence="7">Causes strong chitin defects in the cell wall which results in over-compensation by other synthases following activation of cell wall integrity (PubMed:38468360). Leads to a reduction of chitin in the lateral cell wall (PubMed:38468360). Reduces drastically spore production (PubMed:38468360). Leads to resistance to AFP, a small, basic and cysteine-rich peptide that exerts extremely potent antifungal activity by inhibitiing cell wall chitin biosynthesis (PubMed:38468360).</text>
</comment>
<comment type="similarity">
    <text evidence="9">In the N-terminal section; belongs to the TRAFAC class myosin-kinesin ATPase superfamily. Myosin family.</text>
</comment>
<comment type="similarity">
    <text evidence="9">In the C-terminal section; belongs to the chitin synthase family. Class V subfamily.</text>
</comment>
<dbReference type="EC" id="2.4.1.16" evidence="10"/>
<dbReference type="EMBL" id="AM269999">
    <property type="protein sequence ID" value="CAK96410.1"/>
    <property type="molecule type" value="Genomic_DNA"/>
</dbReference>
<dbReference type="SMR" id="A2QC57"/>
<dbReference type="CAZy" id="GT2">
    <property type="family name" value="Glycosyltransferase Family 2"/>
</dbReference>
<dbReference type="EnsemblFungi" id="CAK96410">
    <property type="protein sequence ID" value="CAK96410"/>
    <property type="gene ID" value="An02g02360"/>
</dbReference>
<dbReference type="VEuPathDB" id="FungiDB:An02g02360"/>
<dbReference type="HOGENOM" id="CLU_000192_0_2_1"/>
<dbReference type="Proteomes" id="UP000006706">
    <property type="component" value="Chromosome 4R"/>
</dbReference>
<dbReference type="GO" id="GO:0030428">
    <property type="term" value="C:cell septum"/>
    <property type="evidence" value="ECO:0007669"/>
    <property type="project" value="UniProtKB-SubCell"/>
</dbReference>
<dbReference type="GO" id="GO:0051286">
    <property type="term" value="C:cell tip"/>
    <property type="evidence" value="ECO:0007669"/>
    <property type="project" value="UniProtKB-SubCell"/>
</dbReference>
<dbReference type="GO" id="GO:0016459">
    <property type="term" value="C:myosin complex"/>
    <property type="evidence" value="ECO:0007669"/>
    <property type="project" value="UniProtKB-KW"/>
</dbReference>
<dbReference type="GO" id="GO:0005886">
    <property type="term" value="C:plasma membrane"/>
    <property type="evidence" value="ECO:0007669"/>
    <property type="project" value="UniProtKB-SubCell"/>
</dbReference>
<dbReference type="GO" id="GO:0003779">
    <property type="term" value="F:actin binding"/>
    <property type="evidence" value="ECO:0007669"/>
    <property type="project" value="UniProtKB-KW"/>
</dbReference>
<dbReference type="GO" id="GO:0005524">
    <property type="term" value="F:ATP binding"/>
    <property type="evidence" value="ECO:0007669"/>
    <property type="project" value="UniProtKB-KW"/>
</dbReference>
<dbReference type="GO" id="GO:0004100">
    <property type="term" value="F:chitin synthase activity"/>
    <property type="evidence" value="ECO:0007669"/>
    <property type="project" value="UniProtKB-EC"/>
</dbReference>
<dbReference type="GO" id="GO:0003774">
    <property type="term" value="F:cytoskeletal motor activity"/>
    <property type="evidence" value="ECO:0007669"/>
    <property type="project" value="InterPro"/>
</dbReference>
<dbReference type="GO" id="GO:0006031">
    <property type="term" value="P:chitin biosynthetic process"/>
    <property type="evidence" value="ECO:0007669"/>
    <property type="project" value="TreeGrafter"/>
</dbReference>
<dbReference type="GO" id="GO:0031505">
    <property type="term" value="P:fungal-type cell wall organization"/>
    <property type="evidence" value="ECO:0007669"/>
    <property type="project" value="TreeGrafter"/>
</dbReference>
<dbReference type="CDD" id="cd14879">
    <property type="entry name" value="MYSc_Myo17"/>
    <property type="match status" value="1"/>
</dbReference>
<dbReference type="FunFam" id="1.10.10.820:FF:000012">
    <property type="entry name" value="Chitin synthase ChsE"/>
    <property type="match status" value="1"/>
</dbReference>
<dbReference type="FunFam" id="1.20.58.530:FF:000017">
    <property type="entry name" value="Chitin synthase ChsE"/>
    <property type="match status" value="1"/>
</dbReference>
<dbReference type="FunFam" id="3.10.120.10:FF:000019">
    <property type="entry name" value="Chitin synthase ChsE"/>
    <property type="match status" value="1"/>
</dbReference>
<dbReference type="FunFam" id="3.40.850.10:FF:000055">
    <property type="entry name" value="Chitin synthase ChsE"/>
    <property type="match status" value="1"/>
</dbReference>
<dbReference type="Gene3D" id="1.10.10.820">
    <property type="match status" value="1"/>
</dbReference>
<dbReference type="Gene3D" id="1.20.58.530">
    <property type="match status" value="1"/>
</dbReference>
<dbReference type="Gene3D" id="3.10.120.10">
    <property type="entry name" value="Cytochrome b5-like heme/steroid binding domain"/>
    <property type="match status" value="1"/>
</dbReference>
<dbReference type="Gene3D" id="3.40.850.10">
    <property type="entry name" value="Kinesin motor domain"/>
    <property type="match status" value="1"/>
</dbReference>
<dbReference type="Gene3D" id="1.20.120.720">
    <property type="entry name" value="Myosin VI head, motor domain, U50 subdomain"/>
    <property type="match status" value="1"/>
</dbReference>
<dbReference type="InterPro" id="IPR004835">
    <property type="entry name" value="Chitin_synth"/>
</dbReference>
<dbReference type="InterPro" id="IPR001199">
    <property type="entry name" value="Cyt_B5-like_heme/steroid-bd"/>
</dbReference>
<dbReference type="InterPro" id="IPR036400">
    <property type="entry name" value="Cyt_B5-like_heme/steroid_sf"/>
</dbReference>
<dbReference type="InterPro" id="IPR036961">
    <property type="entry name" value="Kinesin_motor_dom_sf"/>
</dbReference>
<dbReference type="InterPro" id="IPR001609">
    <property type="entry name" value="Myosin_head_motor_dom-like"/>
</dbReference>
<dbReference type="InterPro" id="IPR036037">
    <property type="entry name" value="MYSc_Myo17"/>
</dbReference>
<dbReference type="InterPro" id="IPR029044">
    <property type="entry name" value="Nucleotide-diphossugar_trans"/>
</dbReference>
<dbReference type="InterPro" id="IPR027417">
    <property type="entry name" value="P-loop_NTPase"/>
</dbReference>
<dbReference type="PANTHER" id="PTHR22914">
    <property type="entry name" value="CHITIN SYNTHASE"/>
    <property type="match status" value="1"/>
</dbReference>
<dbReference type="PANTHER" id="PTHR22914:SF45">
    <property type="entry name" value="CHITIN SYNTHASE"/>
    <property type="match status" value="1"/>
</dbReference>
<dbReference type="Pfam" id="PF03142">
    <property type="entry name" value="Chitin_synth_2"/>
    <property type="match status" value="1"/>
</dbReference>
<dbReference type="Pfam" id="PF00173">
    <property type="entry name" value="Cyt-b5"/>
    <property type="match status" value="1"/>
</dbReference>
<dbReference type="Pfam" id="PF00063">
    <property type="entry name" value="Myosin_head"/>
    <property type="match status" value="1"/>
</dbReference>
<dbReference type="SMART" id="SM01117">
    <property type="entry name" value="Cyt-b5"/>
    <property type="match status" value="2"/>
</dbReference>
<dbReference type="SMART" id="SM00242">
    <property type="entry name" value="MYSc"/>
    <property type="match status" value="1"/>
</dbReference>
<dbReference type="SUPFAM" id="SSF55856">
    <property type="entry name" value="Cytochrome b5-like heme/steroid binding domain"/>
    <property type="match status" value="1"/>
</dbReference>
<dbReference type="SUPFAM" id="SSF53448">
    <property type="entry name" value="Nucleotide-diphospho-sugar transferases"/>
    <property type="match status" value="1"/>
</dbReference>
<dbReference type="SUPFAM" id="SSF52540">
    <property type="entry name" value="P-loop containing nucleoside triphosphate hydrolases"/>
    <property type="match status" value="1"/>
</dbReference>
<dbReference type="PROSITE" id="PS50255">
    <property type="entry name" value="CYTOCHROME_B5_2"/>
    <property type="match status" value="1"/>
</dbReference>
<dbReference type="PROSITE" id="PS51456">
    <property type="entry name" value="MYOSIN_MOTOR"/>
    <property type="match status" value="1"/>
</dbReference>